<keyword id="KW-0963">Cytoplasm</keyword>
<keyword id="KW-0554">One-carbon metabolism</keyword>
<keyword id="KW-0560">Oxidoreductase</keyword>
<keyword id="KW-1185">Reference proteome</keyword>
<evidence type="ECO:0000255" key="1">
    <source>
        <dbReference type="HAMAP-Rule" id="MF_01091"/>
    </source>
</evidence>
<sequence>MKFGIEFVPDMKYYELEYYVKLAEDSGFDYTWITDHYNNRNVYSMLTILALKTRTIKLGPGVTNPYHISPALTASAIGTINEISGGRAVLGIGAGDKVTFERIGITWEKPLKRMREAVEIIRQLTEGKAVKYDGEIFKFNGAKLGFKPGSIPIYIGAQGPKMLQLAAELGDGVLINASHPKDFEVAKENIDAGLAKAGKSRDAFDTVAYASMSVDKDRDKARNAARIVVAFIVAGSPPTVLERHGLSEDAVNAVREALNNAFTKGDWGGVAKSVTDEMIDIFSISGTPDDVIERINELSKAGVTQVVAGSPIGPDKKKSIQLIGKEIIPKLK</sequence>
<gene>
    <name evidence="1" type="primary">mer</name>
    <name type="ordered locus">AF_1066</name>
</gene>
<proteinExistence type="inferred from homology"/>
<reference key="1">
    <citation type="journal article" date="1997" name="Nature">
        <title>The complete genome sequence of the hyperthermophilic, sulphate-reducing archaeon Archaeoglobus fulgidus.</title>
        <authorList>
            <person name="Klenk H.-P."/>
            <person name="Clayton R.A."/>
            <person name="Tomb J.-F."/>
            <person name="White O."/>
            <person name="Nelson K.E."/>
            <person name="Ketchum K.A."/>
            <person name="Dodson R.J."/>
            <person name="Gwinn M.L."/>
            <person name="Hickey E.K."/>
            <person name="Peterson J.D."/>
            <person name="Richardson D.L."/>
            <person name="Kerlavage A.R."/>
            <person name="Graham D.E."/>
            <person name="Kyrpides N.C."/>
            <person name="Fleischmann R.D."/>
            <person name="Quackenbush J."/>
            <person name="Lee N.H."/>
            <person name="Sutton G.G."/>
            <person name="Gill S.R."/>
            <person name="Kirkness E.F."/>
            <person name="Dougherty B.A."/>
            <person name="McKenney K."/>
            <person name="Adams M.D."/>
            <person name="Loftus B.J."/>
            <person name="Peterson S.N."/>
            <person name="Reich C.I."/>
            <person name="McNeil L.K."/>
            <person name="Badger J.H."/>
            <person name="Glodek A."/>
            <person name="Zhou L."/>
            <person name="Overbeek R."/>
            <person name="Gocayne J.D."/>
            <person name="Weidman J.F."/>
            <person name="McDonald L.A."/>
            <person name="Utterback T.R."/>
            <person name="Cotton M.D."/>
            <person name="Spriggs T."/>
            <person name="Artiach P."/>
            <person name="Kaine B.P."/>
            <person name="Sykes S.M."/>
            <person name="Sadow P.W."/>
            <person name="D'Andrea K.P."/>
            <person name="Bowman C."/>
            <person name="Fujii C."/>
            <person name="Garland S.A."/>
            <person name="Mason T.M."/>
            <person name="Olsen G.J."/>
            <person name="Fraser C.M."/>
            <person name="Smith H.O."/>
            <person name="Woese C.R."/>
            <person name="Venter J.C."/>
        </authorList>
    </citation>
    <scope>NUCLEOTIDE SEQUENCE [LARGE SCALE GENOMIC DNA]</scope>
    <source>
        <strain>ATCC 49558 / DSM 4304 / JCM 9628 / NBRC 100126 / VC-16</strain>
    </source>
</reference>
<protein>
    <recommendedName>
        <fullName evidence="1">5,10-methylenetetrahydromethanopterin reductase</fullName>
        <ecNumber evidence="1">1.5.98.2</ecNumber>
    </recommendedName>
    <alternativeName>
        <fullName evidence="1">Coenzyme F420-dependent N(5),N(10)-methylenetetrahydromethanopterin reductase</fullName>
    </alternativeName>
    <alternativeName>
        <fullName evidence="1">Methylene-H(4)MPT reductase</fullName>
    </alternativeName>
</protein>
<dbReference type="EC" id="1.5.98.2" evidence="1"/>
<dbReference type="EMBL" id="AE000782">
    <property type="protein sequence ID" value="AAB90174.1"/>
    <property type="molecule type" value="Genomic_DNA"/>
</dbReference>
<dbReference type="PIR" id="B69383">
    <property type="entry name" value="B69383"/>
</dbReference>
<dbReference type="RefSeq" id="WP_010878566.1">
    <property type="nucleotide sequence ID" value="NC_000917.1"/>
</dbReference>
<dbReference type="SMR" id="O29196"/>
<dbReference type="STRING" id="224325.AF_1066"/>
<dbReference type="PaxDb" id="224325-AF_1066"/>
<dbReference type="EnsemblBacteria" id="AAB90174">
    <property type="protein sequence ID" value="AAB90174"/>
    <property type="gene ID" value="AF_1066"/>
</dbReference>
<dbReference type="GeneID" id="24794676"/>
<dbReference type="KEGG" id="afu:AF_1066"/>
<dbReference type="eggNOG" id="arCOG02410">
    <property type="taxonomic scope" value="Archaea"/>
</dbReference>
<dbReference type="HOGENOM" id="CLU_027853_5_3_2"/>
<dbReference type="OrthoDB" id="213164at2157"/>
<dbReference type="PhylomeDB" id="O29196"/>
<dbReference type="BioCyc" id="MetaCyc:AF_RS05405-MONOMER"/>
<dbReference type="UniPathway" id="UPA00701"/>
<dbReference type="Proteomes" id="UP000002199">
    <property type="component" value="Chromosome"/>
</dbReference>
<dbReference type="GO" id="GO:0005737">
    <property type="term" value="C:cytoplasm"/>
    <property type="evidence" value="ECO:0007669"/>
    <property type="project" value="UniProtKB-SubCell"/>
</dbReference>
<dbReference type="GO" id="GO:0018537">
    <property type="term" value="F:coenzyme F420-dependent N5,N10-methenyltetrahydromethanopterin reductase activity"/>
    <property type="evidence" value="ECO:0007669"/>
    <property type="project" value="UniProtKB-UniRule"/>
</dbReference>
<dbReference type="GO" id="GO:0016705">
    <property type="term" value="F:oxidoreductase activity, acting on paired donors, with incorporation or reduction of molecular oxygen"/>
    <property type="evidence" value="ECO:0007669"/>
    <property type="project" value="InterPro"/>
</dbReference>
<dbReference type="GO" id="GO:0006089">
    <property type="term" value="P:lactate metabolic process"/>
    <property type="evidence" value="ECO:0007669"/>
    <property type="project" value="UniProtKB-UniRule"/>
</dbReference>
<dbReference type="GO" id="GO:0006730">
    <property type="term" value="P:one-carbon metabolic process"/>
    <property type="evidence" value="ECO:0007669"/>
    <property type="project" value="UniProtKB-UniRule"/>
</dbReference>
<dbReference type="CDD" id="cd01097">
    <property type="entry name" value="Tetrahydromethanopterin_reductase"/>
    <property type="match status" value="1"/>
</dbReference>
<dbReference type="Gene3D" id="3.20.20.30">
    <property type="entry name" value="Luciferase-like domain"/>
    <property type="match status" value="1"/>
</dbReference>
<dbReference type="HAMAP" id="MF_01091">
    <property type="entry name" value="F420_mer"/>
    <property type="match status" value="1"/>
</dbReference>
<dbReference type="InterPro" id="IPR050564">
    <property type="entry name" value="F420-G6PD/mer"/>
</dbReference>
<dbReference type="InterPro" id="IPR011251">
    <property type="entry name" value="Luciferase-like_dom"/>
</dbReference>
<dbReference type="InterPro" id="IPR036661">
    <property type="entry name" value="Luciferase-like_sf"/>
</dbReference>
<dbReference type="InterPro" id="IPR019946">
    <property type="entry name" value="MeH4methanopterin_reductase"/>
</dbReference>
<dbReference type="NCBIfam" id="TIGR03555">
    <property type="entry name" value="F420_mer"/>
    <property type="match status" value="1"/>
</dbReference>
<dbReference type="NCBIfam" id="NF002619">
    <property type="entry name" value="PRK02271.1"/>
    <property type="match status" value="1"/>
</dbReference>
<dbReference type="PANTHER" id="PTHR43244">
    <property type="match status" value="1"/>
</dbReference>
<dbReference type="PANTHER" id="PTHR43244:SF1">
    <property type="entry name" value="5,10-METHYLENETETRAHYDROMETHANOPTERIN REDUCTASE"/>
    <property type="match status" value="1"/>
</dbReference>
<dbReference type="Pfam" id="PF00296">
    <property type="entry name" value="Bac_luciferase"/>
    <property type="match status" value="1"/>
</dbReference>
<dbReference type="SUPFAM" id="SSF51679">
    <property type="entry name" value="Bacterial luciferase-like"/>
    <property type="match status" value="1"/>
</dbReference>
<accession>O29196</accession>
<organism>
    <name type="scientific">Archaeoglobus fulgidus (strain ATCC 49558 / DSM 4304 / JCM 9628 / NBRC 100126 / VC-16)</name>
    <dbReference type="NCBI Taxonomy" id="224325"/>
    <lineage>
        <taxon>Archaea</taxon>
        <taxon>Methanobacteriati</taxon>
        <taxon>Methanobacteriota</taxon>
        <taxon>Archaeoglobi</taxon>
        <taxon>Archaeoglobales</taxon>
        <taxon>Archaeoglobaceae</taxon>
        <taxon>Archaeoglobus</taxon>
    </lineage>
</organism>
<comment type="function">
    <text evidence="1">Catalyzes the oxidation of methyl-H(4)MPT to methylene-H(4)MPT.</text>
</comment>
<comment type="catalytic activity">
    <reaction evidence="1">
        <text>5-methyl-5,6,7,8-tetrahydromethanopterin + oxidized coenzyme F420-(gamma-L-Glu)(n) + H(+) = 5,10-methylenetetrahydromethanopterin + reduced coenzyme F420-(gamma-L-Glu)(n)</text>
        <dbReference type="Rhea" id="RHEA:21144"/>
        <dbReference type="Rhea" id="RHEA-COMP:12939"/>
        <dbReference type="Rhea" id="RHEA-COMP:14378"/>
        <dbReference type="ChEBI" id="CHEBI:15378"/>
        <dbReference type="ChEBI" id="CHEBI:57818"/>
        <dbReference type="ChEBI" id="CHEBI:58116"/>
        <dbReference type="ChEBI" id="CHEBI:133980"/>
        <dbReference type="ChEBI" id="CHEBI:139511"/>
        <dbReference type="EC" id="1.5.98.2"/>
    </reaction>
</comment>
<comment type="pathway">
    <text evidence="1">Metabolic intermediate metabolism; lactate oxidation.</text>
</comment>
<comment type="subcellular location">
    <subcellularLocation>
        <location evidence="1">Cytoplasm</location>
    </subcellularLocation>
</comment>
<comment type="similarity">
    <text evidence="1">Belongs to the mer family.</text>
</comment>
<name>MER_ARCFU</name>
<feature type="chain" id="PRO_0000084805" description="5,10-methylenetetrahydromethanopterin reductase">
    <location>
        <begin position="1"/>
        <end position="332"/>
    </location>
</feature>